<sequence>MIKVGVFGALGRMGSEVVKAVEAADDTELVAGIDVGDDRGKVLGADVVVDFTHPDAVMDNLRWLIEHGIHAVVGTTGFDDARLAEVRRMLDAKPGVNVLIAPNFGIAAVLMMHFAAKAAPYFESAEIIELHHPNKADAPSGTAYRTAELIGAARAHAGLGDAPDATTSELPGARGAQVDGVRVHALRITGMIAHQEVVFGTHGETLRIRHDSMNRESFMPGVLLGVRKVASLPDRLTVGLESLLGL</sequence>
<protein>
    <recommendedName>
        <fullName evidence="1">4-hydroxy-tetrahydrodipicolinate reductase</fullName>
        <shortName evidence="1">HTPA reductase</shortName>
        <ecNumber evidence="1">1.17.1.8</ecNumber>
    </recommendedName>
</protein>
<dbReference type="EC" id="1.17.1.8" evidence="1"/>
<dbReference type="EMBL" id="CP000088">
    <property type="protein sequence ID" value="AAZ54824.1"/>
    <property type="molecule type" value="Genomic_DNA"/>
</dbReference>
<dbReference type="SMR" id="Q47RU3"/>
<dbReference type="STRING" id="269800.Tfu_0786"/>
<dbReference type="KEGG" id="tfu:Tfu_0786"/>
<dbReference type="eggNOG" id="COG0289">
    <property type="taxonomic scope" value="Bacteria"/>
</dbReference>
<dbReference type="HOGENOM" id="CLU_047479_0_1_11"/>
<dbReference type="UniPathway" id="UPA00034">
    <property type="reaction ID" value="UER00018"/>
</dbReference>
<dbReference type="GO" id="GO:0005829">
    <property type="term" value="C:cytosol"/>
    <property type="evidence" value="ECO:0007669"/>
    <property type="project" value="TreeGrafter"/>
</dbReference>
<dbReference type="GO" id="GO:0008839">
    <property type="term" value="F:4-hydroxy-tetrahydrodipicolinate reductase"/>
    <property type="evidence" value="ECO:0007669"/>
    <property type="project" value="UniProtKB-EC"/>
</dbReference>
<dbReference type="GO" id="GO:0051287">
    <property type="term" value="F:NAD binding"/>
    <property type="evidence" value="ECO:0007669"/>
    <property type="project" value="UniProtKB-UniRule"/>
</dbReference>
<dbReference type="GO" id="GO:0050661">
    <property type="term" value="F:NADP binding"/>
    <property type="evidence" value="ECO:0007669"/>
    <property type="project" value="UniProtKB-UniRule"/>
</dbReference>
<dbReference type="GO" id="GO:0016726">
    <property type="term" value="F:oxidoreductase activity, acting on CH or CH2 groups, NAD or NADP as acceptor"/>
    <property type="evidence" value="ECO:0007669"/>
    <property type="project" value="UniProtKB-UniRule"/>
</dbReference>
<dbReference type="GO" id="GO:0019877">
    <property type="term" value="P:diaminopimelate biosynthetic process"/>
    <property type="evidence" value="ECO:0007669"/>
    <property type="project" value="UniProtKB-UniRule"/>
</dbReference>
<dbReference type="GO" id="GO:0009089">
    <property type="term" value="P:lysine biosynthetic process via diaminopimelate"/>
    <property type="evidence" value="ECO:0007669"/>
    <property type="project" value="UniProtKB-UniRule"/>
</dbReference>
<dbReference type="CDD" id="cd02274">
    <property type="entry name" value="DHDPR_N"/>
    <property type="match status" value="1"/>
</dbReference>
<dbReference type="FunFam" id="3.30.360.10:FF:000009">
    <property type="entry name" value="4-hydroxy-tetrahydrodipicolinate reductase"/>
    <property type="match status" value="1"/>
</dbReference>
<dbReference type="Gene3D" id="3.30.360.10">
    <property type="entry name" value="Dihydrodipicolinate Reductase, domain 2"/>
    <property type="match status" value="1"/>
</dbReference>
<dbReference type="Gene3D" id="3.40.50.720">
    <property type="entry name" value="NAD(P)-binding Rossmann-like Domain"/>
    <property type="match status" value="1"/>
</dbReference>
<dbReference type="HAMAP" id="MF_00102">
    <property type="entry name" value="DapB"/>
    <property type="match status" value="1"/>
</dbReference>
<dbReference type="InterPro" id="IPR022663">
    <property type="entry name" value="DapB_C"/>
</dbReference>
<dbReference type="InterPro" id="IPR000846">
    <property type="entry name" value="DapB_N"/>
</dbReference>
<dbReference type="InterPro" id="IPR022664">
    <property type="entry name" value="DapB_N_CS"/>
</dbReference>
<dbReference type="InterPro" id="IPR023940">
    <property type="entry name" value="DHDPR_bac"/>
</dbReference>
<dbReference type="InterPro" id="IPR036291">
    <property type="entry name" value="NAD(P)-bd_dom_sf"/>
</dbReference>
<dbReference type="NCBIfam" id="TIGR00036">
    <property type="entry name" value="dapB"/>
    <property type="match status" value="1"/>
</dbReference>
<dbReference type="PANTHER" id="PTHR20836:SF0">
    <property type="entry name" value="4-HYDROXY-TETRAHYDRODIPICOLINATE REDUCTASE 1, CHLOROPLASTIC-RELATED"/>
    <property type="match status" value="1"/>
</dbReference>
<dbReference type="PANTHER" id="PTHR20836">
    <property type="entry name" value="DIHYDRODIPICOLINATE REDUCTASE"/>
    <property type="match status" value="1"/>
</dbReference>
<dbReference type="Pfam" id="PF05173">
    <property type="entry name" value="DapB_C"/>
    <property type="match status" value="1"/>
</dbReference>
<dbReference type="Pfam" id="PF01113">
    <property type="entry name" value="DapB_N"/>
    <property type="match status" value="1"/>
</dbReference>
<dbReference type="PIRSF" id="PIRSF000161">
    <property type="entry name" value="DHPR"/>
    <property type="match status" value="1"/>
</dbReference>
<dbReference type="SUPFAM" id="SSF55347">
    <property type="entry name" value="Glyceraldehyde-3-phosphate dehydrogenase-like, C-terminal domain"/>
    <property type="match status" value="1"/>
</dbReference>
<dbReference type="SUPFAM" id="SSF51735">
    <property type="entry name" value="NAD(P)-binding Rossmann-fold domains"/>
    <property type="match status" value="1"/>
</dbReference>
<dbReference type="PROSITE" id="PS01298">
    <property type="entry name" value="DAPB"/>
    <property type="match status" value="1"/>
</dbReference>
<accession>Q47RU3</accession>
<organism>
    <name type="scientific">Thermobifida fusca (strain YX)</name>
    <dbReference type="NCBI Taxonomy" id="269800"/>
    <lineage>
        <taxon>Bacteria</taxon>
        <taxon>Bacillati</taxon>
        <taxon>Actinomycetota</taxon>
        <taxon>Actinomycetes</taxon>
        <taxon>Streptosporangiales</taxon>
        <taxon>Nocardiopsidaceae</taxon>
        <taxon>Thermobifida</taxon>
    </lineage>
</organism>
<evidence type="ECO:0000255" key="1">
    <source>
        <dbReference type="HAMAP-Rule" id="MF_00102"/>
    </source>
</evidence>
<evidence type="ECO:0000305" key="2"/>
<keyword id="KW-0028">Amino-acid biosynthesis</keyword>
<keyword id="KW-0963">Cytoplasm</keyword>
<keyword id="KW-0220">Diaminopimelate biosynthesis</keyword>
<keyword id="KW-0457">Lysine biosynthesis</keyword>
<keyword id="KW-0520">NAD</keyword>
<keyword id="KW-0521">NADP</keyword>
<keyword id="KW-0560">Oxidoreductase</keyword>
<comment type="function">
    <text evidence="1">Catalyzes the conversion of 4-hydroxy-tetrahydrodipicolinate (HTPA) to tetrahydrodipicolinate.</text>
</comment>
<comment type="catalytic activity">
    <reaction evidence="1">
        <text>(S)-2,3,4,5-tetrahydrodipicolinate + NAD(+) + H2O = (2S,4S)-4-hydroxy-2,3,4,5-tetrahydrodipicolinate + NADH + H(+)</text>
        <dbReference type="Rhea" id="RHEA:35323"/>
        <dbReference type="ChEBI" id="CHEBI:15377"/>
        <dbReference type="ChEBI" id="CHEBI:15378"/>
        <dbReference type="ChEBI" id="CHEBI:16845"/>
        <dbReference type="ChEBI" id="CHEBI:57540"/>
        <dbReference type="ChEBI" id="CHEBI:57945"/>
        <dbReference type="ChEBI" id="CHEBI:67139"/>
        <dbReference type="EC" id="1.17.1.8"/>
    </reaction>
</comment>
<comment type="catalytic activity">
    <reaction evidence="1">
        <text>(S)-2,3,4,5-tetrahydrodipicolinate + NADP(+) + H2O = (2S,4S)-4-hydroxy-2,3,4,5-tetrahydrodipicolinate + NADPH + H(+)</text>
        <dbReference type="Rhea" id="RHEA:35331"/>
        <dbReference type="ChEBI" id="CHEBI:15377"/>
        <dbReference type="ChEBI" id="CHEBI:15378"/>
        <dbReference type="ChEBI" id="CHEBI:16845"/>
        <dbReference type="ChEBI" id="CHEBI:57783"/>
        <dbReference type="ChEBI" id="CHEBI:58349"/>
        <dbReference type="ChEBI" id="CHEBI:67139"/>
        <dbReference type="EC" id="1.17.1.8"/>
    </reaction>
</comment>
<comment type="pathway">
    <text evidence="1">Amino-acid biosynthesis; L-lysine biosynthesis via DAP pathway; (S)-tetrahydrodipicolinate from L-aspartate: step 4/4.</text>
</comment>
<comment type="subcellular location">
    <subcellularLocation>
        <location evidence="1">Cytoplasm</location>
    </subcellularLocation>
</comment>
<comment type="similarity">
    <text evidence="1">Belongs to the DapB family.</text>
</comment>
<comment type="caution">
    <text evidence="2">Was originally thought to be a dihydrodipicolinate reductase (DHDPR), catalyzing the conversion of dihydrodipicolinate to tetrahydrodipicolinate. However, it was shown in E.coli that the substrate of the enzymatic reaction is not dihydrodipicolinate (DHDP) but in fact (2S,4S)-4-hydroxy-2,3,4,5-tetrahydrodipicolinic acid (HTPA), the product released by the DapA-catalyzed reaction.</text>
</comment>
<proteinExistence type="inferred from homology"/>
<reference key="1">
    <citation type="journal article" date="2007" name="J. Bacteriol.">
        <title>Genome sequence and analysis of the soil cellulolytic actinomycete Thermobifida fusca YX.</title>
        <authorList>
            <person name="Lykidis A."/>
            <person name="Mavromatis K."/>
            <person name="Ivanova N."/>
            <person name="Anderson I."/>
            <person name="Land M."/>
            <person name="DiBartolo G."/>
            <person name="Martinez M."/>
            <person name="Lapidus A."/>
            <person name="Lucas S."/>
            <person name="Copeland A."/>
            <person name="Richardson P."/>
            <person name="Wilson D.B."/>
            <person name="Kyrpides N."/>
        </authorList>
    </citation>
    <scope>NUCLEOTIDE SEQUENCE [LARGE SCALE GENOMIC DNA]</scope>
    <source>
        <strain>YX</strain>
    </source>
</reference>
<feature type="chain" id="PRO_0000228397" description="4-hydroxy-tetrahydrodipicolinate reductase">
    <location>
        <begin position="1"/>
        <end position="246"/>
    </location>
</feature>
<feature type="active site" description="Proton donor/acceptor" evidence="1">
    <location>
        <position position="131"/>
    </location>
</feature>
<feature type="active site" description="Proton donor" evidence="1">
    <location>
        <position position="135"/>
    </location>
</feature>
<feature type="binding site" evidence="1">
    <location>
        <begin position="8"/>
        <end position="13"/>
    </location>
    <ligand>
        <name>NAD(+)</name>
        <dbReference type="ChEBI" id="CHEBI:57540"/>
    </ligand>
</feature>
<feature type="binding site" evidence="1">
    <location>
        <position position="34"/>
    </location>
    <ligand>
        <name>NAD(+)</name>
        <dbReference type="ChEBI" id="CHEBI:57540"/>
    </ligand>
</feature>
<feature type="binding site" evidence="1">
    <location>
        <begin position="74"/>
        <end position="76"/>
    </location>
    <ligand>
        <name>NAD(+)</name>
        <dbReference type="ChEBI" id="CHEBI:57540"/>
    </ligand>
</feature>
<feature type="binding site" evidence="1">
    <location>
        <begin position="101"/>
        <end position="104"/>
    </location>
    <ligand>
        <name>NAD(+)</name>
        <dbReference type="ChEBI" id="CHEBI:57540"/>
    </ligand>
</feature>
<feature type="binding site" evidence="1">
    <location>
        <position position="132"/>
    </location>
    <ligand>
        <name>(S)-2,3,4,5-tetrahydrodipicolinate</name>
        <dbReference type="ChEBI" id="CHEBI:16845"/>
    </ligand>
</feature>
<feature type="binding site" evidence="1">
    <location>
        <begin position="141"/>
        <end position="142"/>
    </location>
    <ligand>
        <name>(S)-2,3,4,5-tetrahydrodipicolinate</name>
        <dbReference type="ChEBI" id="CHEBI:16845"/>
    </ligand>
</feature>
<gene>
    <name evidence="1" type="primary">dapB</name>
    <name type="ordered locus">Tfu_0786</name>
</gene>
<name>DAPB_THEFY</name>